<comment type="catalytic activity">
    <reaction evidence="1">
        <text>2 reduced [2Fe-2S]-[ferredoxin] + NADP(+) + H(+) = 2 oxidized [2Fe-2S]-[ferredoxin] + NADPH</text>
        <dbReference type="Rhea" id="RHEA:20125"/>
        <dbReference type="Rhea" id="RHEA-COMP:10000"/>
        <dbReference type="Rhea" id="RHEA-COMP:10001"/>
        <dbReference type="ChEBI" id="CHEBI:15378"/>
        <dbReference type="ChEBI" id="CHEBI:33737"/>
        <dbReference type="ChEBI" id="CHEBI:33738"/>
        <dbReference type="ChEBI" id="CHEBI:57783"/>
        <dbReference type="ChEBI" id="CHEBI:58349"/>
        <dbReference type="EC" id="1.18.1.2"/>
    </reaction>
</comment>
<comment type="cofactor">
    <cofactor evidence="1">
        <name>FAD</name>
        <dbReference type="ChEBI" id="CHEBI:57692"/>
    </cofactor>
    <text evidence="1">Binds 1 FAD per subunit.</text>
</comment>
<comment type="subunit">
    <text evidence="1">Homodimer.</text>
</comment>
<comment type="similarity">
    <text evidence="1">Belongs to the ferredoxin--NADP reductase type 2 family.</text>
</comment>
<dbReference type="EC" id="1.18.1.2" evidence="1"/>
<dbReference type="EMBL" id="CP000774">
    <property type="protein sequence ID" value="ABS64131.1"/>
    <property type="molecule type" value="Genomic_DNA"/>
</dbReference>
<dbReference type="RefSeq" id="WP_012111442.1">
    <property type="nucleotide sequence ID" value="NC_009719.1"/>
</dbReference>
<dbReference type="SMR" id="A7HW48"/>
<dbReference type="STRING" id="402881.Plav_2522"/>
<dbReference type="KEGG" id="pla:Plav_2522"/>
<dbReference type="eggNOG" id="COG0492">
    <property type="taxonomic scope" value="Bacteria"/>
</dbReference>
<dbReference type="HOGENOM" id="CLU_031864_5_5_5"/>
<dbReference type="OrthoDB" id="9806179at2"/>
<dbReference type="Proteomes" id="UP000006377">
    <property type="component" value="Chromosome"/>
</dbReference>
<dbReference type="GO" id="GO:0004324">
    <property type="term" value="F:ferredoxin-NADP+ reductase activity"/>
    <property type="evidence" value="ECO:0007669"/>
    <property type="project" value="UniProtKB-UniRule"/>
</dbReference>
<dbReference type="GO" id="GO:0050660">
    <property type="term" value="F:flavin adenine dinucleotide binding"/>
    <property type="evidence" value="ECO:0007669"/>
    <property type="project" value="UniProtKB-UniRule"/>
</dbReference>
<dbReference type="GO" id="GO:0050661">
    <property type="term" value="F:NADP binding"/>
    <property type="evidence" value="ECO:0007669"/>
    <property type="project" value="UniProtKB-UniRule"/>
</dbReference>
<dbReference type="Gene3D" id="3.50.50.60">
    <property type="entry name" value="FAD/NAD(P)-binding domain"/>
    <property type="match status" value="2"/>
</dbReference>
<dbReference type="HAMAP" id="MF_01685">
    <property type="entry name" value="FENR2"/>
    <property type="match status" value="1"/>
</dbReference>
<dbReference type="InterPro" id="IPR036188">
    <property type="entry name" value="FAD/NAD-bd_sf"/>
</dbReference>
<dbReference type="InterPro" id="IPR023753">
    <property type="entry name" value="FAD/NAD-binding_dom"/>
</dbReference>
<dbReference type="InterPro" id="IPR022890">
    <property type="entry name" value="Fd--NADP_Rdtase_type_2"/>
</dbReference>
<dbReference type="InterPro" id="IPR050097">
    <property type="entry name" value="Ferredoxin-NADP_redctase_2"/>
</dbReference>
<dbReference type="PANTHER" id="PTHR48105">
    <property type="entry name" value="THIOREDOXIN REDUCTASE 1-RELATED-RELATED"/>
    <property type="match status" value="1"/>
</dbReference>
<dbReference type="Pfam" id="PF07992">
    <property type="entry name" value="Pyr_redox_2"/>
    <property type="match status" value="1"/>
</dbReference>
<dbReference type="PRINTS" id="PR00368">
    <property type="entry name" value="FADPNR"/>
</dbReference>
<dbReference type="PRINTS" id="PR00469">
    <property type="entry name" value="PNDRDTASEII"/>
</dbReference>
<dbReference type="SUPFAM" id="SSF51905">
    <property type="entry name" value="FAD/NAD(P)-binding domain"/>
    <property type="match status" value="1"/>
</dbReference>
<proteinExistence type="inferred from homology"/>
<sequence length="343" mass="37561">MTQETITTDVVIVGAGPCGLFAVFELGLLDMKCHLVDILDKPGGQCAELYPEKPIYDIPALPVVSGHELTERLMEQAAPFGPQYHYNEMVEEVQKLEDGRWRVKTDGGLVFEAKVVVIAAGGGSFQPKKPPIPGIEAYEGKSVFYAVKRMETFRGKNVLISGGGDSALDWTINLHPIVQSMQLIHRRDGFRAAPDSVNKMHALVEEKKMQFHLGQITSLHGDNGQLEGVTVKGNDGADYQIECDTLLPFFGLTMKLGPIANWGINLHENLIPVDTEKFQTSEPGLFAIGDINTYPGKLKLILSGFHEAALMAQAAFRYANPDAKLTFQYTTSSTSLQKKLGVA</sequence>
<reference key="1">
    <citation type="journal article" date="2011" name="Stand. Genomic Sci.">
        <title>Complete genome sequence of Parvibaculum lavamentivorans type strain (DS-1(T)).</title>
        <authorList>
            <person name="Schleheck D."/>
            <person name="Weiss M."/>
            <person name="Pitluck S."/>
            <person name="Bruce D."/>
            <person name="Land M.L."/>
            <person name="Han S."/>
            <person name="Saunders E."/>
            <person name="Tapia R."/>
            <person name="Detter C."/>
            <person name="Brettin T."/>
            <person name="Han J."/>
            <person name="Woyke T."/>
            <person name="Goodwin L."/>
            <person name="Pennacchio L."/>
            <person name="Nolan M."/>
            <person name="Cook A.M."/>
            <person name="Kjelleberg S."/>
            <person name="Thomas T."/>
        </authorList>
    </citation>
    <scope>NUCLEOTIDE SEQUENCE [LARGE SCALE GENOMIC DNA]</scope>
    <source>
        <strain>DS-1 / DSM 13023 / NCIMB 13966</strain>
    </source>
</reference>
<organism>
    <name type="scientific">Parvibaculum lavamentivorans (strain DS-1 / DSM 13023 / NCIMB 13966)</name>
    <dbReference type="NCBI Taxonomy" id="402881"/>
    <lineage>
        <taxon>Bacteria</taxon>
        <taxon>Pseudomonadati</taxon>
        <taxon>Pseudomonadota</taxon>
        <taxon>Alphaproteobacteria</taxon>
        <taxon>Hyphomicrobiales</taxon>
        <taxon>Parvibaculaceae</taxon>
        <taxon>Parvibaculum</taxon>
    </lineage>
</organism>
<name>FENR_PARL1</name>
<accession>A7HW48</accession>
<feature type="chain" id="PRO_0000364893" description="Ferredoxin--NADP reductase">
    <location>
        <begin position="1"/>
        <end position="343"/>
    </location>
</feature>
<feature type="binding site" evidence="1">
    <location>
        <position position="18"/>
    </location>
    <ligand>
        <name>FAD</name>
        <dbReference type="ChEBI" id="CHEBI:57692"/>
    </ligand>
</feature>
<feature type="binding site" evidence="1">
    <location>
        <position position="37"/>
    </location>
    <ligand>
        <name>FAD</name>
        <dbReference type="ChEBI" id="CHEBI:57692"/>
    </ligand>
</feature>
<feature type="binding site" evidence="1">
    <location>
        <position position="45"/>
    </location>
    <ligand>
        <name>FAD</name>
        <dbReference type="ChEBI" id="CHEBI:57692"/>
    </ligand>
</feature>
<feature type="binding site" evidence="1">
    <location>
        <position position="50"/>
    </location>
    <ligand>
        <name>FAD</name>
        <dbReference type="ChEBI" id="CHEBI:57692"/>
    </ligand>
</feature>
<feature type="binding site" evidence="1">
    <location>
        <position position="90"/>
    </location>
    <ligand>
        <name>FAD</name>
        <dbReference type="ChEBI" id="CHEBI:57692"/>
    </ligand>
</feature>
<feature type="binding site" evidence="1">
    <location>
        <position position="125"/>
    </location>
    <ligand>
        <name>FAD</name>
        <dbReference type="ChEBI" id="CHEBI:57692"/>
    </ligand>
</feature>
<feature type="binding site" evidence="1">
    <location>
        <position position="290"/>
    </location>
    <ligand>
        <name>FAD</name>
        <dbReference type="ChEBI" id="CHEBI:57692"/>
    </ligand>
</feature>
<feature type="binding site" evidence="1">
    <location>
        <position position="331"/>
    </location>
    <ligand>
        <name>FAD</name>
        <dbReference type="ChEBI" id="CHEBI:57692"/>
    </ligand>
</feature>
<protein>
    <recommendedName>
        <fullName evidence="1">Ferredoxin--NADP reductase</fullName>
        <shortName evidence="1">FNR</shortName>
        <shortName evidence="1">Fd-NADP(+) reductase</shortName>
        <ecNumber evidence="1">1.18.1.2</ecNumber>
    </recommendedName>
</protein>
<keyword id="KW-0274">FAD</keyword>
<keyword id="KW-0285">Flavoprotein</keyword>
<keyword id="KW-0521">NADP</keyword>
<keyword id="KW-0560">Oxidoreductase</keyword>
<keyword id="KW-1185">Reference proteome</keyword>
<evidence type="ECO:0000255" key="1">
    <source>
        <dbReference type="HAMAP-Rule" id="MF_01685"/>
    </source>
</evidence>
<gene>
    <name type="ordered locus">Plav_2522</name>
</gene>